<keyword id="KW-0028">Amino-acid biosynthesis</keyword>
<keyword id="KW-0963">Cytoplasm</keyword>
<keyword id="KW-0315">Glutamine amidotransferase</keyword>
<keyword id="KW-0368">Histidine biosynthesis</keyword>
<keyword id="KW-0378">Hydrolase</keyword>
<keyword id="KW-0456">Lyase</keyword>
<feature type="chain" id="PRO_0000152425" description="Imidazole glycerol phosphate synthase subunit HisH">
    <location>
        <begin position="1"/>
        <end position="192"/>
    </location>
</feature>
<feature type="domain" description="Glutamine amidotransferase type-1" evidence="1">
    <location>
        <begin position="1"/>
        <end position="192"/>
    </location>
</feature>
<feature type="active site" description="Nucleophile" evidence="1">
    <location>
        <position position="77"/>
    </location>
</feature>
<feature type="active site" evidence="1">
    <location>
        <position position="169"/>
    </location>
</feature>
<feature type="active site" evidence="1">
    <location>
        <position position="171"/>
    </location>
</feature>
<dbReference type="EC" id="4.3.2.10" evidence="1"/>
<dbReference type="EC" id="3.5.1.2" evidence="1"/>
<dbReference type="EMBL" id="BX571856">
    <property type="protein sequence ID" value="CAG41732.1"/>
    <property type="molecule type" value="Genomic_DNA"/>
</dbReference>
<dbReference type="RefSeq" id="WP_000635613.1">
    <property type="nucleotide sequence ID" value="NC_002952.2"/>
</dbReference>
<dbReference type="SMR" id="Q6GDC9"/>
<dbReference type="KEGG" id="sar:SAR2757"/>
<dbReference type="HOGENOM" id="CLU_071837_2_2_9"/>
<dbReference type="UniPathway" id="UPA00031">
    <property type="reaction ID" value="UER00010"/>
</dbReference>
<dbReference type="Proteomes" id="UP000000596">
    <property type="component" value="Chromosome"/>
</dbReference>
<dbReference type="GO" id="GO:0005737">
    <property type="term" value="C:cytoplasm"/>
    <property type="evidence" value="ECO:0007669"/>
    <property type="project" value="UniProtKB-SubCell"/>
</dbReference>
<dbReference type="GO" id="GO:0004359">
    <property type="term" value="F:glutaminase activity"/>
    <property type="evidence" value="ECO:0007669"/>
    <property type="project" value="UniProtKB-EC"/>
</dbReference>
<dbReference type="GO" id="GO:0000107">
    <property type="term" value="F:imidazoleglycerol-phosphate synthase activity"/>
    <property type="evidence" value="ECO:0007669"/>
    <property type="project" value="UniProtKB-UniRule"/>
</dbReference>
<dbReference type="GO" id="GO:0016829">
    <property type="term" value="F:lyase activity"/>
    <property type="evidence" value="ECO:0007669"/>
    <property type="project" value="UniProtKB-KW"/>
</dbReference>
<dbReference type="GO" id="GO:0000105">
    <property type="term" value="P:L-histidine biosynthetic process"/>
    <property type="evidence" value="ECO:0007669"/>
    <property type="project" value="UniProtKB-UniRule"/>
</dbReference>
<dbReference type="CDD" id="cd01748">
    <property type="entry name" value="GATase1_IGP_Synthase"/>
    <property type="match status" value="1"/>
</dbReference>
<dbReference type="Gene3D" id="3.40.50.880">
    <property type="match status" value="1"/>
</dbReference>
<dbReference type="HAMAP" id="MF_00278">
    <property type="entry name" value="HisH"/>
    <property type="match status" value="1"/>
</dbReference>
<dbReference type="InterPro" id="IPR029062">
    <property type="entry name" value="Class_I_gatase-like"/>
</dbReference>
<dbReference type="InterPro" id="IPR017926">
    <property type="entry name" value="GATASE"/>
</dbReference>
<dbReference type="InterPro" id="IPR010139">
    <property type="entry name" value="Imidazole-glycPsynth_HisH"/>
</dbReference>
<dbReference type="NCBIfam" id="TIGR01855">
    <property type="entry name" value="IMP_synth_hisH"/>
    <property type="match status" value="1"/>
</dbReference>
<dbReference type="PANTHER" id="PTHR42701">
    <property type="entry name" value="IMIDAZOLE GLYCEROL PHOSPHATE SYNTHASE SUBUNIT HISH"/>
    <property type="match status" value="1"/>
</dbReference>
<dbReference type="PANTHER" id="PTHR42701:SF1">
    <property type="entry name" value="IMIDAZOLE GLYCEROL PHOSPHATE SYNTHASE SUBUNIT HISH"/>
    <property type="match status" value="1"/>
</dbReference>
<dbReference type="Pfam" id="PF00117">
    <property type="entry name" value="GATase"/>
    <property type="match status" value="1"/>
</dbReference>
<dbReference type="PIRSF" id="PIRSF000495">
    <property type="entry name" value="Amidotransf_hisH"/>
    <property type="match status" value="1"/>
</dbReference>
<dbReference type="SUPFAM" id="SSF52317">
    <property type="entry name" value="Class I glutamine amidotransferase-like"/>
    <property type="match status" value="1"/>
</dbReference>
<dbReference type="PROSITE" id="PS51273">
    <property type="entry name" value="GATASE_TYPE_1"/>
    <property type="match status" value="1"/>
</dbReference>
<proteinExistence type="inferred from homology"/>
<evidence type="ECO:0000255" key="1">
    <source>
        <dbReference type="HAMAP-Rule" id="MF_00278"/>
    </source>
</evidence>
<name>HIS5_STAAR</name>
<protein>
    <recommendedName>
        <fullName evidence="1">Imidazole glycerol phosphate synthase subunit HisH</fullName>
        <ecNumber evidence="1">4.3.2.10</ecNumber>
    </recommendedName>
    <alternativeName>
        <fullName evidence="1">IGP synthase glutaminase subunit</fullName>
        <ecNumber evidence="1">3.5.1.2</ecNumber>
    </alternativeName>
    <alternativeName>
        <fullName evidence="1">IGP synthase subunit HisH</fullName>
    </alternativeName>
    <alternativeName>
        <fullName evidence="1">ImGP synthase subunit HisH</fullName>
        <shortName evidence="1">IGPS subunit HisH</shortName>
    </alternativeName>
</protein>
<gene>
    <name evidence="1" type="primary">hisH</name>
    <name type="ordered locus">SAR2757</name>
</gene>
<sequence>MIVIVDYGLGNISNVKRAIEHLGYEVVVSNKQNIIDQAETIILPGVGHFKDAMSEIKRLNLDAILAKNTDKKMIGICLGMQLMYEHSDEGDASGLGFIPGNISRIQTEYPVPHLGWNNLVSKHPMLNQDVYFVHSYQAPMSENVIAYAQYGTDIPAIVQFNNYIGIQFHPEKSGTYGLQILRQAIQGGFIND</sequence>
<organism>
    <name type="scientific">Staphylococcus aureus (strain MRSA252)</name>
    <dbReference type="NCBI Taxonomy" id="282458"/>
    <lineage>
        <taxon>Bacteria</taxon>
        <taxon>Bacillati</taxon>
        <taxon>Bacillota</taxon>
        <taxon>Bacilli</taxon>
        <taxon>Bacillales</taxon>
        <taxon>Staphylococcaceae</taxon>
        <taxon>Staphylococcus</taxon>
    </lineage>
</organism>
<comment type="function">
    <text evidence="1">IGPS catalyzes the conversion of PRFAR and glutamine to IGP, AICAR and glutamate. The HisH subunit catalyzes the hydrolysis of glutamine to glutamate and ammonia as part of the synthesis of IGP and AICAR. The resulting ammonia molecule is channeled to the active site of HisF.</text>
</comment>
<comment type="catalytic activity">
    <reaction evidence="1">
        <text>5-[(5-phospho-1-deoxy-D-ribulos-1-ylimino)methylamino]-1-(5-phospho-beta-D-ribosyl)imidazole-4-carboxamide + L-glutamine = D-erythro-1-(imidazol-4-yl)glycerol 3-phosphate + 5-amino-1-(5-phospho-beta-D-ribosyl)imidazole-4-carboxamide + L-glutamate + H(+)</text>
        <dbReference type="Rhea" id="RHEA:24793"/>
        <dbReference type="ChEBI" id="CHEBI:15378"/>
        <dbReference type="ChEBI" id="CHEBI:29985"/>
        <dbReference type="ChEBI" id="CHEBI:58278"/>
        <dbReference type="ChEBI" id="CHEBI:58359"/>
        <dbReference type="ChEBI" id="CHEBI:58475"/>
        <dbReference type="ChEBI" id="CHEBI:58525"/>
        <dbReference type="EC" id="4.3.2.10"/>
    </reaction>
</comment>
<comment type="catalytic activity">
    <reaction evidence="1">
        <text>L-glutamine + H2O = L-glutamate + NH4(+)</text>
        <dbReference type="Rhea" id="RHEA:15889"/>
        <dbReference type="ChEBI" id="CHEBI:15377"/>
        <dbReference type="ChEBI" id="CHEBI:28938"/>
        <dbReference type="ChEBI" id="CHEBI:29985"/>
        <dbReference type="ChEBI" id="CHEBI:58359"/>
        <dbReference type="EC" id="3.5.1.2"/>
    </reaction>
</comment>
<comment type="pathway">
    <text evidence="1">Amino-acid biosynthesis; L-histidine biosynthesis; L-histidine from 5-phospho-alpha-D-ribose 1-diphosphate: step 5/9.</text>
</comment>
<comment type="subunit">
    <text evidence="1">Heterodimer of HisH and HisF.</text>
</comment>
<comment type="subcellular location">
    <subcellularLocation>
        <location evidence="1">Cytoplasm</location>
    </subcellularLocation>
</comment>
<reference key="1">
    <citation type="journal article" date="2004" name="Proc. Natl. Acad. Sci. U.S.A.">
        <title>Complete genomes of two clinical Staphylococcus aureus strains: evidence for the rapid evolution of virulence and drug resistance.</title>
        <authorList>
            <person name="Holden M.T.G."/>
            <person name="Feil E.J."/>
            <person name="Lindsay J.A."/>
            <person name="Peacock S.J."/>
            <person name="Day N.P.J."/>
            <person name="Enright M.C."/>
            <person name="Foster T.J."/>
            <person name="Moore C.E."/>
            <person name="Hurst L."/>
            <person name="Atkin R."/>
            <person name="Barron A."/>
            <person name="Bason N."/>
            <person name="Bentley S.D."/>
            <person name="Chillingworth C."/>
            <person name="Chillingworth T."/>
            <person name="Churcher C."/>
            <person name="Clark L."/>
            <person name="Corton C."/>
            <person name="Cronin A."/>
            <person name="Doggett J."/>
            <person name="Dowd L."/>
            <person name="Feltwell T."/>
            <person name="Hance Z."/>
            <person name="Harris B."/>
            <person name="Hauser H."/>
            <person name="Holroyd S."/>
            <person name="Jagels K."/>
            <person name="James K.D."/>
            <person name="Lennard N."/>
            <person name="Line A."/>
            <person name="Mayes R."/>
            <person name="Moule S."/>
            <person name="Mungall K."/>
            <person name="Ormond D."/>
            <person name="Quail M.A."/>
            <person name="Rabbinowitsch E."/>
            <person name="Rutherford K.M."/>
            <person name="Sanders M."/>
            <person name="Sharp S."/>
            <person name="Simmonds M."/>
            <person name="Stevens K."/>
            <person name="Whitehead S."/>
            <person name="Barrell B.G."/>
            <person name="Spratt B.G."/>
            <person name="Parkhill J."/>
        </authorList>
    </citation>
    <scope>NUCLEOTIDE SEQUENCE [LARGE SCALE GENOMIC DNA]</scope>
    <source>
        <strain>MRSA252</strain>
    </source>
</reference>
<accession>Q6GDC9</accession>